<accession>Q9WUL6</accession>
<comment type="function">
    <text evidence="2 7">Lymphotoxin beta-activated kinase which seems to be exclusively involved in the activation of NF-kappa-B and its transcriptional activity. Phosphorylates CHUK/IKKA (By similarity). Promotes proteolytic processing of NFKB2/P100, which leads to activation of NF-kappa-B via the non-canonical pathway (PubMed:11239468). Has an essential role in the non-canonical NF-kappa-B signalining that regulates genes encoding molecules involved in B-cell survival, lymphoid organogenesis, and immune response (By similarity). Could act in a receptor-selective manner.</text>
</comment>
<comment type="catalytic activity">
    <reaction>
        <text>L-seryl-[protein] + ATP = O-phospho-L-seryl-[protein] + ADP + H(+)</text>
        <dbReference type="Rhea" id="RHEA:17989"/>
        <dbReference type="Rhea" id="RHEA-COMP:9863"/>
        <dbReference type="Rhea" id="RHEA-COMP:11604"/>
        <dbReference type="ChEBI" id="CHEBI:15378"/>
        <dbReference type="ChEBI" id="CHEBI:29999"/>
        <dbReference type="ChEBI" id="CHEBI:30616"/>
        <dbReference type="ChEBI" id="CHEBI:83421"/>
        <dbReference type="ChEBI" id="CHEBI:456216"/>
        <dbReference type="EC" id="2.7.11.25"/>
    </reaction>
</comment>
<comment type="catalytic activity">
    <reaction>
        <text>L-threonyl-[protein] + ATP = O-phospho-L-threonyl-[protein] + ADP + H(+)</text>
        <dbReference type="Rhea" id="RHEA:46608"/>
        <dbReference type="Rhea" id="RHEA-COMP:11060"/>
        <dbReference type="Rhea" id="RHEA-COMP:11605"/>
        <dbReference type="ChEBI" id="CHEBI:15378"/>
        <dbReference type="ChEBI" id="CHEBI:30013"/>
        <dbReference type="ChEBI" id="CHEBI:30616"/>
        <dbReference type="ChEBI" id="CHEBI:61977"/>
        <dbReference type="ChEBI" id="CHEBI:456216"/>
        <dbReference type="EC" id="2.7.11.25"/>
    </reaction>
</comment>
<comment type="subunit">
    <text evidence="2 8">Interacts with TRAF2, TRAF3, TRAF5, TRAF6, IKKA and NF-kappa-B2/P100. Interacts with PELI3. Interacts with NIBP; the interaction is direct. Interacts with ARRB1 and ARRB2. Interacts with GRB10. Interacts with ZFP91 (By similarity). Interacts with NLRP12; this interaction promotes proteasomal degradation of MAP3K14. Directly interacts with DDX3X (By similarity). Interacts (via C-terminus and kinase domain) with PPPC3A (via N-terminus) and PPP3CB (PubMed:26029823).</text>
</comment>
<comment type="subcellular location">
    <subcellularLocation>
        <location>Cytoplasm</location>
    </subcellularLocation>
</comment>
<comment type="PTM">
    <text evidence="1">Phosphorylation at Thr-561 is required to activate its kinase activity and 'Lys-63'-linked polyubiquitination. Phosphorylated by CHUK/IKKA leading to MAP3K14 destabilization (By similarity). Autophosphorylated.</text>
</comment>
<comment type="PTM">
    <text evidence="1">Ubiquitinated. Undergoes both 'Lys-48'- and 'Lys-63'-linked polyubiquitination. 'Lys-48'-linked polyubiquitination leads to its degradation by the proteasome, while 'Lys-63'-linked polyubiquitination stabilizes and activates it (By similarity).</text>
</comment>
<comment type="disruption phenotype">
    <text evidence="6">Mice display the alymphoplasia phenotype (aly), which is characterized by systemic absence of lymph nodes and Peyer patches and disorganized splenic and thymic structures with immunodeficiency.</text>
</comment>
<comment type="similarity">
    <text evidence="10">Belongs to the protein kinase superfamily. STE Ser/Thr protein kinase family. MAP kinase kinase kinase subfamily.</text>
</comment>
<evidence type="ECO:0000250" key="1"/>
<evidence type="ECO:0000250" key="2">
    <source>
        <dbReference type="UniProtKB" id="Q99558"/>
    </source>
</evidence>
<evidence type="ECO:0000255" key="3">
    <source>
        <dbReference type="PROSITE-ProRule" id="PRU00159"/>
    </source>
</evidence>
<evidence type="ECO:0000255" key="4">
    <source>
        <dbReference type="PROSITE-ProRule" id="PRU10027"/>
    </source>
</evidence>
<evidence type="ECO:0000256" key="5">
    <source>
        <dbReference type="SAM" id="MobiDB-lite"/>
    </source>
</evidence>
<evidence type="ECO:0000269" key="6">
    <source>
    </source>
</evidence>
<evidence type="ECO:0000269" key="7">
    <source>
    </source>
</evidence>
<evidence type="ECO:0000269" key="8">
    <source>
    </source>
</evidence>
<evidence type="ECO:0000303" key="9">
    <source>
    </source>
</evidence>
<evidence type="ECO:0000305" key="10"/>
<evidence type="ECO:0000312" key="11">
    <source>
        <dbReference type="MGI" id="MGI:1858204"/>
    </source>
</evidence>
<evidence type="ECO:0007829" key="12">
    <source>
        <dbReference type="PDB" id="4G3C"/>
    </source>
</evidence>
<evidence type="ECO:0007829" key="13">
    <source>
        <dbReference type="PDB" id="4G3F"/>
    </source>
</evidence>
<evidence type="ECO:0007829" key="14">
    <source>
        <dbReference type="PDB" id="5T8O"/>
    </source>
</evidence>
<evidence type="ECO:0007829" key="15">
    <source>
        <dbReference type="PDB" id="5T8Q"/>
    </source>
</evidence>
<evidence type="ECO:0007829" key="16">
    <source>
        <dbReference type="PDB" id="6G4Z"/>
    </source>
</evidence>
<feature type="chain" id="PRO_0000086267" description="Mitogen-activated protein kinase kinase kinase 14">
    <location>
        <begin position="1"/>
        <end position="942"/>
    </location>
</feature>
<feature type="domain" description="Protein kinase" evidence="3">
    <location>
        <begin position="402"/>
        <end position="657"/>
    </location>
</feature>
<feature type="region of interest" description="Disordered" evidence="5">
    <location>
        <begin position="136"/>
        <end position="156"/>
    </location>
</feature>
<feature type="region of interest" description="Disordered" evidence="5">
    <location>
        <begin position="291"/>
        <end position="326"/>
    </location>
</feature>
<feature type="region of interest" description="Interaction with ZFP91" evidence="1">
    <location>
        <begin position="403"/>
        <end position="655"/>
    </location>
</feature>
<feature type="region of interest" description="Disordered" evidence="5">
    <location>
        <begin position="660"/>
        <end position="756"/>
    </location>
</feature>
<feature type="region of interest" description="Disordered" evidence="5">
    <location>
        <begin position="801"/>
        <end position="823"/>
    </location>
</feature>
<feature type="compositionally biased region" description="Basic residues" evidence="5">
    <location>
        <begin position="136"/>
        <end position="152"/>
    </location>
</feature>
<feature type="compositionally biased region" description="Pro residues" evidence="5">
    <location>
        <begin position="707"/>
        <end position="720"/>
    </location>
</feature>
<feature type="compositionally biased region" description="Polar residues" evidence="5">
    <location>
        <begin position="809"/>
        <end position="823"/>
    </location>
</feature>
<feature type="active site" description="Proton acceptor" evidence="3 4">
    <location>
        <position position="517"/>
    </location>
</feature>
<feature type="binding site" evidence="3">
    <location>
        <begin position="408"/>
        <end position="416"/>
    </location>
    <ligand>
        <name>ATP</name>
        <dbReference type="ChEBI" id="CHEBI:30616"/>
    </ligand>
</feature>
<feature type="binding site" evidence="3">
    <location>
        <position position="431"/>
    </location>
    <ligand>
        <name>ATP</name>
        <dbReference type="ChEBI" id="CHEBI:30616"/>
    </ligand>
</feature>
<feature type="modified residue" description="Phosphothreonine" evidence="2">
    <location>
        <position position="561"/>
    </location>
</feature>
<feature type="mutagenesis site" description="In ALY; no binding to IKKA." evidence="6">
    <original>G</original>
    <variation>R</variation>
    <location>
        <position position="855"/>
    </location>
</feature>
<feature type="helix" evidence="12">
    <location>
        <begin position="335"/>
        <end position="343"/>
    </location>
</feature>
<feature type="strand" evidence="13">
    <location>
        <begin position="346"/>
        <end position="349"/>
    </location>
</feature>
<feature type="helix" evidence="13">
    <location>
        <begin position="352"/>
        <end position="359"/>
    </location>
</feature>
<feature type="turn" evidence="13">
    <location>
        <begin position="360"/>
        <end position="362"/>
    </location>
</feature>
<feature type="strand" evidence="13">
    <location>
        <begin position="379"/>
        <end position="383"/>
    </location>
</feature>
<feature type="turn" evidence="13">
    <location>
        <begin position="397"/>
        <end position="399"/>
    </location>
</feature>
<feature type="strand" evidence="13">
    <location>
        <begin position="400"/>
        <end position="411"/>
    </location>
</feature>
<feature type="strand" evidence="13">
    <location>
        <begin position="414"/>
        <end position="421"/>
    </location>
</feature>
<feature type="turn" evidence="13">
    <location>
        <begin position="422"/>
        <end position="424"/>
    </location>
</feature>
<feature type="strand" evidence="13">
    <location>
        <begin position="427"/>
        <end position="434"/>
    </location>
</feature>
<feature type="turn" evidence="13">
    <location>
        <begin position="435"/>
        <end position="437"/>
    </location>
</feature>
<feature type="helix" evidence="13">
    <location>
        <begin position="441"/>
        <end position="444"/>
    </location>
</feature>
<feature type="turn" evidence="13">
    <location>
        <begin position="445"/>
        <end position="448"/>
    </location>
</feature>
<feature type="strand" evidence="13">
    <location>
        <begin position="457"/>
        <end position="463"/>
    </location>
</feature>
<feature type="strand" evidence="13">
    <location>
        <begin position="466"/>
        <end position="471"/>
    </location>
</feature>
<feature type="helix" evidence="13">
    <location>
        <begin position="479"/>
        <end position="486"/>
    </location>
</feature>
<feature type="helix" evidence="13">
    <location>
        <begin position="491"/>
        <end position="509"/>
    </location>
</feature>
<feature type="turn" evidence="13">
    <location>
        <begin position="510"/>
        <end position="512"/>
    </location>
</feature>
<feature type="helix" evidence="13">
    <location>
        <begin position="520"/>
        <end position="522"/>
    </location>
</feature>
<feature type="strand" evidence="13">
    <location>
        <begin position="523"/>
        <end position="525"/>
    </location>
</feature>
<feature type="strand" evidence="16">
    <location>
        <begin position="527"/>
        <end position="530"/>
    </location>
</feature>
<feature type="strand" evidence="13">
    <location>
        <begin position="532"/>
        <end position="534"/>
    </location>
</feature>
<feature type="turn" evidence="14">
    <location>
        <begin position="545"/>
        <end position="547"/>
    </location>
</feature>
<feature type="strand" evidence="14">
    <location>
        <begin position="550"/>
        <end position="552"/>
    </location>
</feature>
<feature type="strand" evidence="15">
    <location>
        <begin position="553"/>
        <end position="556"/>
    </location>
</feature>
<feature type="helix" evidence="13">
    <location>
        <begin position="562"/>
        <end position="564"/>
    </location>
</feature>
<feature type="helix" evidence="13">
    <location>
        <begin position="567"/>
        <end position="570"/>
    </location>
</feature>
<feature type="helix" evidence="13">
    <location>
        <begin position="578"/>
        <end position="593"/>
    </location>
</feature>
<feature type="turn" evidence="13">
    <location>
        <begin position="599"/>
        <end position="601"/>
    </location>
</feature>
<feature type="helix" evidence="13">
    <location>
        <begin position="607"/>
        <end position="612"/>
    </location>
</feature>
<feature type="helix" evidence="13">
    <location>
        <begin position="616"/>
        <end position="619"/>
    </location>
</feature>
<feature type="helix" evidence="13">
    <location>
        <begin position="626"/>
        <end position="635"/>
    </location>
</feature>
<feature type="helix" evidence="13">
    <location>
        <begin position="640"/>
        <end position="642"/>
    </location>
</feature>
<feature type="helix" evidence="13">
    <location>
        <begin position="646"/>
        <end position="659"/>
    </location>
</feature>
<feature type="strand" evidence="13">
    <location>
        <begin position="667"/>
        <end position="670"/>
    </location>
</feature>
<gene>
    <name evidence="11" type="primary">Map3k14</name>
    <name evidence="9" type="synonym">Nik</name>
</gene>
<reference key="1">
    <citation type="journal article" date="1999" name="Nat. Genet.">
        <title>Alymphoplasia is caused by a point mutation in the mouse gene encoding Nf-kappa b-inducing kinase.</title>
        <authorList>
            <person name="Shinkura R."/>
            <person name="Kitada K."/>
            <person name="Matsuda F."/>
            <person name="Tashiro K."/>
            <person name="Ikuta K."/>
            <person name="Suzuki M."/>
            <person name="Kogishi K."/>
            <person name="Serikawa T."/>
            <person name="Honjo T."/>
        </authorList>
    </citation>
    <scope>NUCLEOTIDE SEQUENCE [MRNA]</scope>
    <scope>DISRUPTION PHENOTYPE</scope>
    <scope>MUTAGENESIS OF GLY-855</scope>
    <source>
        <strain>C57BL/6J</strain>
        <tissue>Spleen</tissue>
    </source>
</reference>
<reference key="2">
    <citation type="journal article" date="2001" name="Mol. Cell">
        <title>NF-kappaB-inducing kinase regulates the processing of NF-kappaB2 p100.</title>
        <authorList>
            <person name="Xiao G."/>
            <person name="Harhaj E.W."/>
            <person name="Sun S.-C."/>
        </authorList>
    </citation>
    <scope>FUNCTION</scope>
    <scope>AUTOPHOSPHORYLATION</scope>
</reference>
<reference key="3">
    <citation type="journal article" date="2015" name="Sci. Rep.">
        <title>Catalytic subunits of the phosphatase calcineurin interact with NF-kappaB-inducing kinase (NIK) and attenuate NIK-dependent gene expression.</title>
        <authorList>
            <person name="Shinzawa M."/>
            <person name="Konno H."/>
            <person name="Qin J."/>
            <person name="Akiyama N."/>
            <person name="Miyauchi M."/>
            <person name="Ohashi H."/>
            <person name="Miyamoto-Sato E."/>
            <person name="Yanagawa H."/>
            <person name="Akiyama T."/>
            <person name="Inoue J."/>
        </authorList>
    </citation>
    <scope>INTERACTION WITH PPP3CA AND PPP3CB</scope>
</reference>
<dbReference type="EC" id="2.7.11.25"/>
<dbReference type="EMBL" id="AF143094">
    <property type="protein sequence ID" value="AAD31512.1"/>
    <property type="molecule type" value="mRNA"/>
</dbReference>
<dbReference type="CCDS" id="CCDS25516.1"/>
<dbReference type="RefSeq" id="NP_058592.1">
    <property type="nucleotide sequence ID" value="NM_016896.3"/>
</dbReference>
<dbReference type="PDB" id="4G3C">
    <property type="method" value="X-ray"/>
    <property type="resolution" value="2.15 A"/>
    <property type="chains" value="A/B=329-675"/>
</dbReference>
<dbReference type="PDB" id="4G3E">
    <property type="method" value="X-ray"/>
    <property type="resolution" value="2.50 A"/>
    <property type="chains" value="A/B=329-675"/>
</dbReference>
<dbReference type="PDB" id="4G3F">
    <property type="method" value="X-ray"/>
    <property type="resolution" value="1.64 A"/>
    <property type="chains" value="A=345-675"/>
</dbReference>
<dbReference type="PDB" id="4G3G">
    <property type="method" value="X-ray"/>
    <property type="resolution" value="2.50 A"/>
    <property type="chains" value="A=345-675"/>
</dbReference>
<dbReference type="PDB" id="5T8O">
    <property type="method" value="X-ray"/>
    <property type="resolution" value="2.41 A"/>
    <property type="chains" value="A/B=329-675"/>
</dbReference>
<dbReference type="PDB" id="5T8P">
    <property type="method" value="X-ray"/>
    <property type="resolution" value="2.32 A"/>
    <property type="chains" value="A/B=329-675"/>
</dbReference>
<dbReference type="PDB" id="5T8Q">
    <property type="method" value="X-ray"/>
    <property type="resolution" value="2.63 A"/>
    <property type="chains" value="A/B=329-675"/>
</dbReference>
<dbReference type="PDB" id="6G4Y">
    <property type="method" value="X-ray"/>
    <property type="resolution" value="2.65 A"/>
    <property type="chains" value="A/B=329-675"/>
</dbReference>
<dbReference type="PDB" id="6G4Z">
    <property type="method" value="X-ray"/>
    <property type="resolution" value="2.84 A"/>
    <property type="chains" value="A/B=329-675"/>
</dbReference>
<dbReference type="PDB" id="6MYN">
    <property type="method" value="X-ray"/>
    <property type="resolution" value="2.74 A"/>
    <property type="chains" value="A/B=329-675"/>
</dbReference>
<dbReference type="PDB" id="7SZR">
    <property type="method" value="X-ray"/>
    <property type="resolution" value="2.80 A"/>
    <property type="chains" value="A/B=329-675"/>
</dbReference>
<dbReference type="PDBsum" id="4G3C"/>
<dbReference type="PDBsum" id="4G3E"/>
<dbReference type="PDBsum" id="4G3F"/>
<dbReference type="PDBsum" id="4G3G"/>
<dbReference type="PDBsum" id="5T8O"/>
<dbReference type="PDBsum" id="5T8P"/>
<dbReference type="PDBsum" id="5T8Q"/>
<dbReference type="PDBsum" id="6G4Y"/>
<dbReference type="PDBsum" id="6G4Z"/>
<dbReference type="PDBsum" id="6MYN"/>
<dbReference type="PDBsum" id="7SZR"/>
<dbReference type="SMR" id="Q9WUL6"/>
<dbReference type="BioGRID" id="207493">
    <property type="interactions" value="3"/>
</dbReference>
<dbReference type="CORUM" id="Q9WUL6"/>
<dbReference type="FunCoup" id="Q9WUL6">
    <property type="interactions" value="3317"/>
</dbReference>
<dbReference type="IntAct" id="Q9WUL6">
    <property type="interactions" value="3"/>
</dbReference>
<dbReference type="MINT" id="Q9WUL6"/>
<dbReference type="STRING" id="10090.ENSMUSP00000021324"/>
<dbReference type="ChEMBL" id="CHEMBL4523500"/>
<dbReference type="GuidetoPHARMACOLOGY" id="2074"/>
<dbReference type="GlyGen" id="Q9WUL6">
    <property type="glycosylation" value="1 site"/>
</dbReference>
<dbReference type="iPTMnet" id="Q9WUL6"/>
<dbReference type="PhosphoSitePlus" id="Q9WUL6"/>
<dbReference type="PaxDb" id="10090-ENSMUSP00000021324"/>
<dbReference type="Antibodypedia" id="3862">
    <property type="antibodies" value="358 antibodies from 41 providers"/>
</dbReference>
<dbReference type="DNASU" id="53859"/>
<dbReference type="Ensembl" id="ENSMUST00000021324.3">
    <property type="protein sequence ID" value="ENSMUSP00000021324.3"/>
    <property type="gene ID" value="ENSMUSG00000020941.8"/>
</dbReference>
<dbReference type="GeneID" id="53859"/>
<dbReference type="KEGG" id="mmu:53859"/>
<dbReference type="UCSC" id="uc007lua.1">
    <property type="organism name" value="mouse"/>
</dbReference>
<dbReference type="AGR" id="MGI:1858204"/>
<dbReference type="CTD" id="9020"/>
<dbReference type="MGI" id="MGI:1858204">
    <property type="gene designation" value="Map3k14"/>
</dbReference>
<dbReference type="VEuPathDB" id="HostDB:ENSMUSG00000020941"/>
<dbReference type="eggNOG" id="KOG0198">
    <property type="taxonomic scope" value="Eukaryota"/>
</dbReference>
<dbReference type="GeneTree" id="ENSGT00940000156497"/>
<dbReference type="HOGENOM" id="CLU_010641_1_0_1"/>
<dbReference type="InParanoid" id="Q9WUL6"/>
<dbReference type="OMA" id="IDIWSSC"/>
<dbReference type="OrthoDB" id="5836549at2759"/>
<dbReference type="PhylomeDB" id="Q9WUL6"/>
<dbReference type="TreeFam" id="TF105120"/>
<dbReference type="Reactome" id="R-MMU-389357">
    <property type="pathway name" value="CD28 dependent PI3K/Akt signaling"/>
</dbReference>
<dbReference type="Reactome" id="R-MMU-5607761">
    <property type="pathway name" value="Dectin-1 mediated noncanonical NF-kB signaling"/>
</dbReference>
<dbReference type="Reactome" id="R-MMU-5668541">
    <property type="pathway name" value="TNFR2 non-canonical NF-kB pathway"/>
</dbReference>
<dbReference type="Reactome" id="R-MMU-5676590">
    <property type="pathway name" value="NIK--&gt;noncanonical NF-kB signaling"/>
</dbReference>
<dbReference type="Reactome" id="R-MMU-5676594">
    <property type="pathway name" value="TNF receptor superfamily (TNFSF) members mediating non-canonical NF-kB pathway"/>
</dbReference>
<dbReference type="BioGRID-ORCS" id="53859">
    <property type="hits" value="5 hits in 77 CRISPR screens"/>
</dbReference>
<dbReference type="EvolutionaryTrace" id="Q9WUL6"/>
<dbReference type="PRO" id="PR:Q9WUL6"/>
<dbReference type="Proteomes" id="UP000000589">
    <property type="component" value="Chromosome 11"/>
</dbReference>
<dbReference type="RNAct" id="Q9WUL6">
    <property type="molecule type" value="protein"/>
</dbReference>
<dbReference type="Bgee" id="ENSMUSG00000020941">
    <property type="expression patterns" value="Expressed in granulocyte and 118 other cell types or tissues"/>
</dbReference>
<dbReference type="ExpressionAtlas" id="Q9WUL6">
    <property type="expression patterns" value="baseline and differential"/>
</dbReference>
<dbReference type="GO" id="GO:0005829">
    <property type="term" value="C:cytosol"/>
    <property type="evidence" value="ECO:0007669"/>
    <property type="project" value="Ensembl"/>
</dbReference>
<dbReference type="GO" id="GO:0001650">
    <property type="term" value="C:fibrillar center"/>
    <property type="evidence" value="ECO:0007669"/>
    <property type="project" value="Ensembl"/>
</dbReference>
<dbReference type="GO" id="GO:0005654">
    <property type="term" value="C:nucleoplasm"/>
    <property type="evidence" value="ECO:0007669"/>
    <property type="project" value="Ensembl"/>
</dbReference>
<dbReference type="GO" id="GO:0005524">
    <property type="term" value="F:ATP binding"/>
    <property type="evidence" value="ECO:0007669"/>
    <property type="project" value="UniProtKB-KW"/>
</dbReference>
<dbReference type="GO" id="GO:0004709">
    <property type="term" value="F:MAP kinase kinase kinase activity"/>
    <property type="evidence" value="ECO:0007669"/>
    <property type="project" value="UniProtKB-EC"/>
</dbReference>
<dbReference type="GO" id="GO:0004672">
    <property type="term" value="F:protein kinase activity"/>
    <property type="evidence" value="ECO:0000266"/>
    <property type="project" value="MGI"/>
</dbReference>
<dbReference type="GO" id="GO:0106310">
    <property type="term" value="F:protein serine kinase activity"/>
    <property type="evidence" value="ECO:0007669"/>
    <property type="project" value="RHEA"/>
</dbReference>
<dbReference type="GO" id="GO:0004674">
    <property type="term" value="F:protein serine/threonine kinase activity"/>
    <property type="evidence" value="ECO:0000314"/>
    <property type="project" value="UniProtKB"/>
</dbReference>
<dbReference type="GO" id="GO:0071260">
    <property type="term" value="P:cellular response to mechanical stimulus"/>
    <property type="evidence" value="ECO:0007669"/>
    <property type="project" value="Ensembl"/>
</dbReference>
<dbReference type="GO" id="GO:0051607">
    <property type="term" value="P:defense response to virus"/>
    <property type="evidence" value="ECO:0007669"/>
    <property type="project" value="Ensembl"/>
</dbReference>
<dbReference type="GO" id="GO:0006955">
    <property type="term" value="P:immune response"/>
    <property type="evidence" value="ECO:0000314"/>
    <property type="project" value="UniProtKB"/>
</dbReference>
<dbReference type="GO" id="GO:0038061">
    <property type="term" value="P:non-canonical NF-kappaB signal transduction"/>
    <property type="evidence" value="ECO:0000314"/>
    <property type="project" value="UniProtKB"/>
</dbReference>
<dbReference type="CDD" id="cd13991">
    <property type="entry name" value="STKc_NIK"/>
    <property type="match status" value="1"/>
</dbReference>
<dbReference type="FunFam" id="1.10.510.10:FF:000383">
    <property type="entry name" value="Mitogen-activated protein kinase kinase kinase 14"/>
    <property type="match status" value="1"/>
</dbReference>
<dbReference type="FunFam" id="3.30.200.20:FF:000326">
    <property type="entry name" value="Mitogen-activated protein kinase kinase kinase 14"/>
    <property type="match status" value="1"/>
</dbReference>
<dbReference type="Gene3D" id="3.30.200.20">
    <property type="entry name" value="Phosphorylase Kinase, domain 1"/>
    <property type="match status" value="1"/>
</dbReference>
<dbReference type="Gene3D" id="1.10.510.10">
    <property type="entry name" value="Transferase(Phosphotransferase) domain 1"/>
    <property type="match status" value="1"/>
</dbReference>
<dbReference type="InterPro" id="IPR011009">
    <property type="entry name" value="Kinase-like_dom_sf"/>
</dbReference>
<dbReference type="InterPro" id="IPR042787">
    <property type="entry name" value="M3K14_STKc"/>
</dbReference>
<dbReference type="InterPro" id="IPR050538">
    <property type="entry name" value="MAP_kinase_kinase_kinase"/>
</dbReference>
<dbReference type="InterPro" id="IPR017425">
    <property type="entry name" value="MAPKKK14"/>
</dbReference>
<dbReference type="InterPro" id="IPR000719">
    <property type="entry name" value="Prot_kinase_dom"/>
</dbReference>
<dbReference type="InterPro" id="IPR017441">
    <property type="entry name" value="Protein_kinase_ATP_BS"/>
</dbReference>
<dbReference type="InterPro" id="IPR008271">
    <property type="entry name" value="Ser/Thr_kinase_AS"/>
</dbReference>
<dbReference type="PANTHER" id="PTHR48016">
    <property type="entry name" value="MAP KINASE KINASE KINASE SSK2-RELATED-RELATED"/>
    <property type="match status" value="1"/>
</dbReference>
<dbReference type="PANTHER" id="PTHR48016:SF9">
    <property type="entry name" value="MITOGEN-ACTIVATED PROTEIN KINASE KINASE KINASE 14"/>
    <property type="match status" value="1"/>
</dbReference>
<dbReference type="Pfam" id="PF00069">
    <property type="entry name" value="Pkinase"/>
    <property type="match status" value="1"/>
</dbReference>
<dbReference type="PIRSF" id="PIRSF038175">
    <property type="entry name" value="MAPKKK14"/>
    <property type="match status" value="1"/>
</dbReference>
<dbReference type="SMART" id="SM00220">
    <property type="entry name" value="S_TKc"/>
    <property type="match status" value="1"/>
</dbReference>
<dbReference type="SUPFAM" id="SSF56112">
    <property type="entry name" value="Protein kinase-like (PK-like)"/>
    <property type="match status" value="1"/>
</dbReference>
<dbReference type="PROSITE" id="PS00107">
    <property type="entry name" value="PROTEIN_KINASE_ATP"/>
    <property type="match status" value="1"/>
</dbReference>
<dbReference type="PROSITE" id="PS50011">
    <property type="entry name" value="PROTEIN_KINASE_DOM"/>
    <property type="match status" value="1"/>
</dbReference>
<dbReference type="PROSITE" id="PS00108">
    <property type="entry name" value="PROTEIN_KINASE_ST"/>
    <property type="match status" value="1"/>
</dbReference>
<keyword id="KW-0002">3D-structure</keyword>
<keyword id="KW-0067">ATP-binding</keyword>
<keyword id="KW-0963">Cytoplasm</keyword>
<keyword id="KW-0418">Kinase</keyword>
<keyword id="KW-0547">Nucleotide-binding</keyword>
<keyword id="KW-0597">Phosphoprotein</keyword>
<keyword id="KW-1185">Reference proteome</keyword>
<keyword id="KW-0723">Serine/threonine-protein kinase</keyword>
<keyword id="KW-0808">Transferase</keyword>
<keyword id="KW-0832">Ubl conjugation</keyword>
<sequence length="942" mass="103080">MAVMEVACPGTPGSAVGQQKELAKAKEKTQSLGKKQSCIFKLEAVEKSPVFCGKWEILNDVITKGTAKDGSEGGPPAISIIAQAECENSQEFSPTFSERIFIAGSQQYSQSESLDQIPNNVAHATEGKMARVCRRGKRHGKARKKRRKKRSKSLAQAGVALAKPLPRTPEQESCTIPVQEDESPLGNLYARNVSQFTKPLGGPGLGHLCFKKQDEGLRPVLPRPELHKLISPLQCLNHVWKLHHPQATGPRPHPTHPFPYSGMPHPFPFYPLEPWKPYMLDSAVLDKLAGVSGQRPLPGPPHLSQLAHGDSQKPLPGPHLESSCPSRGALEKVPVEEYLVHALQGSVSSGQAHSLASLAKTWSSGSAKLQRLGPETEDNEGVLLTEKLKPVDYEYREEVHWMTHQPRVGRGSFGEVHRMKDKQTGFQCAVKKVRLEVFRVEELVACAGLSSPRIVPLYGAVREGPWVNIFMELLEGGSLGQLIKQMGCLPEDRALYYLGQALEGLEYLHTRRILHGDVKADNVLLSSDGSRAALCDFGHALCLQPDGLGKSLLTGDYIPGTETHMAPEVVMGKPCDAKVDIWSSCCMMLHMLNGCHPWTQYFRGPLCLKIASEPPPIREIPPSCAPLTAQAIQEGLRKEPVHRASAMELRRKVGKALQEVGGLKSPWKGEYKEPRPPPQDQATCHQTLPTPPRENPPAKANTDGAPEPQPPLPPEPPEPSKAPALNLSKEESGTWEPLPLSSLDPATAKGPSFPDRRATLPELELQQLEIELFLNSLSQPFSLEEQEQILSCLSIDSLSLSDDSEKNPSKASQSSRDTLSSGVHSWNSQAEARTCSCSTALARGRPTDIPSYFNGVKVQIQSLNGEHLHIREFHRVKVGDIATGISSQIPATAFSLVTKDGQPVCYDMEVPDSGIDLQCTLAPDGSFAWTWRVKHGQLENRP</sequence>
<name>M3K14_MOUSE</name>
<protein>
    <recommendedName>
        <fullName evidence="11">Mitogen-activated protein kinase kinase kinase 14</fullName>
        <ecNumber>2.7.11.25</ecNumber>
    </recommendedName>
    <alternativeName>
        <fullName evidence="9">NF-kappa-beta-inducing kinase</fullName>
    </alternativeName>
    <alternativeName>
        <fullName evidence="2">Serine/threonine-protein kinase NIK</fullName>
    </alternativeName>
</protein>
<proteinExistence type="evidence at protein level"/>
<organism>
    <name type="scientific">Mus musculus</name>
    <name type="common">Mouse</name>
    <dbReference type="NCBI Taxonomy" id="10090"/>
    <lineage>
        <taxon>Eukaryota</taxon>
        <taxon>Metazoa</taxon>
        <taxon>Chordata</taxon>
        <taxon>Craniata</taxon>
        <taxon>Vertebrata</taxon>
        <taxon>Euteleostomi</taxon>
        <taxon>Mammalia</taxon>
        <taxon>Eutheria</taxon>
        <taxon>Euarchontoglires</taxon>
        <taxon>Glires</taxon>
        <taxon>Rodentia</taxon>
        <taxon>Myomorpha</taxon>
        <taxon>Muroidea</taxon>
        <taxon>Muridae</taxon>
        <taxon>Murinae</taxon>
        <taxon>Mus</taxon>
        <taxon>Mus</taxon>
    </lineage>
</organism>